<name>SECB_ECOLI</name>
<dbReference type="EMBL" id="M24489">
    <property type="protein sequence ID" value="AAA83907.1"/>
    <property type="molecule type" value="Genomic_DNA"/>
</dbReference>
<dbReference type="EMBL" id="U00039">
    <property type="protein sequence ID" value="AAB18586.1"/>
    <property type="molecule type" value="Genomic_DNA"/>
</dbReference>
<dbReference type="EMBL" id="U00096">
    <property type="protein sequence ID" value="AAC76633.1"/>
    <property type="molecule type" value="Genomic_DNA"/>
</dbReference>
<dbReference type="EMBL" id="AP009048">
    <property type="protein sequence ID" value="BAE77683.1"/>
    <property type="molecule type" value="Genomic_DNA"/>
</dbReference>
<dbReference type="PIR" id="JS0126">
    <property type="entry name" value="VXECS"/>
</dbReference>
<dbReference type="RefSeq" id="NP_418066.1">
    <property type="nucleotide sequence ID" value="NC_000913.3"/>
</dbReference>
<dbReference type="RefSeq" id="WP_000003377.1">
    <property type="nucleotide sequence ID" value="NZ_STEB01000024.1"/>
</dbReference>
<dbReference type="PDB" id="1QYN">
    <property type="method" value="X-ray"/>
    <property type="resolution" value="2.35 A"/>
    <property type="chains" value="A/B/C/D=1-153"/>
</dbReference>
<dbReference type="PDB" id="5JTL">
    <property type="method" value="NMR"/>
    <property type="chains" value="A/B/C/D=1-155"/>
</dbReference>
<dbReference type="PDB" id="5JTM">
    <property type="method" value="NMR"/>
    <property type="chains" value="A/B/C/D=1-155"/>
</dbReference>
<dbReference type="PDB" id="5JTN">
    <property type="method" value="NMR"/>
    <property type="chains" value="A/B/C/D=1-155"/>
</dbReference>
<dbReference type="PDB" id="5JTO">
    <property type="method" value="NMR"/>
    <property type="chains" value="A/B/C/D=1-155"/>
</dbReference>
<dbReference type="PDB" id="5JTP">
    <property type="method" value="NMR"/>
    <property type="chains" value="A/B/C/D=1-155"/>
</dbReference>
<dbReference type="PDB" id="5JTQ">
    <property type="method" value="NMR"/>
    <property type="chains" value="A/B/C/D=1-155"/>
</dbReference>
<dbReference type="PDB" id="5JTR">
    <property type="method" value="NMR"/>
    <property type="chains" value="A/B/C/D=1-155"/>
</dbReference>
<dbReference type="PDBsum" id="1QYN"/>
<dbReference type="PDBsum" id="5JTL"/>
<dbReference type="PDBsum" id="5JTM"/>
<dbReference type="PDBsum" id="5JTN"/>
<dbReference type="PDBsum" id="5JTO"/>
<dbReference type="PDBsum" id="5JTP"/>
<dbReference type="PDBsum" id="5JTQ"/>
<dbReference type="PDBsum" id="5JTR"/>
<dbReference type="SMR" id="P0AG86"/>
<dbReference type="BioGRID" id="4261403">
    <property type="interactions" value="392"/>
</dbReference>
<dbReference type="DIP" id="DIP-47924N"/>
<dbReference type="FunCoup" id="P0AG86">
    <property type="interactions" value="422"/>
</dbReference>
<dbReference type="IntAct" id="P0AG86">
    <property type="interactions" value="14"/>
</dbReference>
<dbReference type="STRING" id="511145.b3609"/>
<dbReference type="jPOST" id="P0AG86"/>
<dbReference type="PaxDb" id="511145-b3609"/>
<dbReference type="EnsemblBacteria" id="AAC76633">
    <property type="protein sequence ID" value="AAC76633"/>
    <property type="gene ID" value="b3609"/>
</dbReference>
<dbReference type="GeneID" id="86944403"/>
<dbReference type="GeneID" id="948123"/>
<dbReference type="KEGG" id="ecj:JW3584"/>
<dbReference type="KEGG" id="eco:b3609"/>
<dbReference type="KEGG" id="ecoc:C3026_19570"/>
<dbReference type="PATRIC" id="fig|1411691.4.peg.3097"/>
<dbReference type="EchoBASE" id="EB0930"/>
<dbReference type="eggNOG" id="COG1952">
    <property type="taxonomic scope" value="Bacteria"/>
</dbReference>
<dbReference type="HOGENOM" id="CLU_111574_1_0_6"/>
<dbReference type="InParanoid" id="P0AG86"/>
<dbReference type="OMA" id="CPNVLFP"/>
<dbReference type="OrthoDB" id="9795145at2"/>
<dbReference type="PhylomeDB" id="P0AG86"/>
<dbReference type="BioCyc" id="EcoCyc:SECB"/>
<dbReference type="EvolutionaryTrace" id="P0AG86"/>
<dbReference type="PRO" id="PR:P0AG86"/>
<dbReference type="Proteomes" id="UP000000625">
    <property type="component" value="Chromosome"/>
</dbReference>
<dbReference type="GO" id="GO:0005829">
    <property type="term" value="C:cytosol"/>
    <property type="evidence" value="ECO:0000314"/>
    <property type="project" value="EcoCyc"/>
</dbReference>
<dbReference type="GO" id="GO:0070678">
    <property type="term" value="F:preprotein binding"/>
    <property type="evidence" value="ECO:0000314"/>
    <property type="project" value="EcoCyc"/>
</dbReference>
<dbReference type="GO" id="GO:0051082">
    <property type="term" value="F:unfolded protein binding"/>
    <property type="evidence" value="ECO:0000314"/>
    <property type="project" value="EcoCyc"/>
</dbReference>
<dbReference type="GO" id="GO:0036506">
    <property type="term" value="P:maintenance of unfolded protein"/>
    <property type="evidence" value="ECO:0000314"/>
    <property type="project" value="EcoCyc"/>
</dbReference>
<dbReference type="GO" id="GO:0006457">
    <property type="term" value="P:protein folding"/>
    <property type="evidence" value="ECO:0007669"/>
    <property type="project" value="UniProtKB-UniRule"/>
</dbReference>
<dbReference type="GO" id="GO:0008104">
    <property type="term" value="P:protein localization"/>
    <property type="evidence" value="ECO:0000315"/>
    <property type="project" value="EcoCyc"/>
</dbReference>
<dbReference type="GO" id="GO:0006605">
    <property type="term" value="P:protein targeting"/>
    <property type="evidence" value="ECO:0000315"/>
    <property type="project" value="EcoliWiki"/>
</dbReference>
<dbReference type="GO" id="GO:0051262">
    <property type="term" value="P:protein tetramerization"/>
    <property type="evidence" value="ECO:0007669"/>
    <property type="project" value="InterPro"/>
</dbReference>
<dbReference type="GO" id="GO:0015031">
    <property type="term" value="P:protein transport"/>
    <property type="evidence" value="ECO:0000315"/>
    <property type="project" value="EcoliWiki"/>
</dbReference>
<dbReference type="GO" id="GO:0043952">
    <property type="term" value="P:protein transport by the Sec complex"/>
    <property type="evidence" value="ECO:0000315"/>
    <property type="project" value="EcoliWiki"/>
</dbReference>
<dbReference type="CDD" id="cd00557">
    <property type="entry name" value="Translocase_SecB"/>
    <property type="match status" value="1"/>
</dbReference>
<dbReference type="FunFam" id="3.10.420.10:FF:000001">
    <property type="entry name" value="Protein-export chaperone SecB"/>
    <property type="match status" value="1"/>
</dbReference>
<dbReference type="Gene3D" id="3.10.420.10">
    <property type="entry name" value="SecB-like"/>
    <property type="match status" value="1"/>
</dbReference>
<dbReference type="HAMAP" id="MF_00821">
    <property type="entry name" value="SecB"/>
    <property type="match status" value="1"/>
</dbReference>
<dbReference type="InterPro" id="IPR003708">
    <property type="entry name" value="SecB"/>
</dbReference>
<dbReference type="InterPro" id="IPR035958">
    <property type="entry name" value="SecB-like_sf"/>
</dbReference>
<dbReference type="NCBIfam" id="NF004390">
    <property type="entry name" value="PRK05751.1-1"/>
    <property type="match status" value="1"/>
</dbReference>
<dbReference type="NCBIfam" id="NF004393">
    <property type="entry name" value="PRK05751.1-4"/>
    <property type="match status" value="1"/>
</dbReference>
<dbReference type="NCBIfam" id="TIGR00809">
    <property type="entry name" value="secB"/>
    <property type="match status" value="1"/>
</dbReference>
<dbReference type="PANTHER" id="PTHR36918">
    <property type="match status" value="1"/>
</dbReference>
<dbReference type="PANTHER" id="PTHR36918:SF1">
    <property type="entry name" value="PROTEIN-EXPORT PROTEIN SECB"/>
    <property type="match status" value="1"/>
</dbReference>
<dbReference type="Pfam" id="PF02556">
    <property type="entry name" value="SecB"/>
    <property type="match status" value="1"/>
</dbReference>
<dbReference type="PRINTS" id="PR01594">
    <property type="entry name" value="SECBCHAPRONE"/>
</dbReference>
<dbReference type="SUPFAM" id="SSF54611">
    <property type="entry name" value="SecB-like"/>
    <property type="match status" value="1"/>
</dbReference>
<feature type="chain" id="PRO_0000055370" description="Protein-export protein SecB">
    <location>
        <begin position="1"/>
        <end position="155"/>
    </location>
</feature>
<feature type="strand" evidence="15">
    <location>
        <begin position="4"/>
        <end position="6"/>
    </location>
</feature>
<feature type="strand" evidence="14">
    <location>
        <begin position="10"/>
        <end position="24"/>
    </location>
</feature>
<feature type="helix" evidence="14">
    <location>
        <begin position="28"/>
        <end position="31"/>
    </location>
</feature>
<feature type="strand" evidence="14">
    <location>
        <begin position="39"/>
        <end position="52"/>
    </location>
</feature>
<feature type="strand" evidence="14">
    <location>
        <begin position="55"/>
        <end position="68"/>
    </location>
</feature>
<feature type="strand" evidence="14">
    <location>
        <begin position="71"/>
        <end position="88"/>
    </location>
</feature>
<feature type="helix" evidence="14">
    <location>
        <begin position="91"/>
        <end position="99"/>
    </location>
</feature>
<feature type="helix" evidence="14">
    <location>
        <begin position="101"/>
        <end position="121"/>
    </location>
</feature>
<feature type="helix" evidence="14">
    <location>
        <begin position="133"/>
        <end position="141"/>
    </location>
</feature>
<accession>P0AG86</accession>
<accession>P15040</accession>
<accession>Q2M7S3</accession>
<sequence length="155" mass="17277">MSEQNNTEMTFQIQRIYTKDISFEAPNAPHVFQKDWQPEVKLDLDTASSQLADDVYEVVLRVTVTASLGEETAFLCEVQQGGIFSIAGIEGTQMAHCLGAYCPNILFPYARECITSMVSRGTFPQLNLAPVNFDALFMNYLQQQAGEGTEEHQDA</sequence>
<reference key="1">
    <citation type="journal article" date="1989" name="Gene">
        <title>Characterization of the Escherichia coli protein-export gene secB.</title>
        <authorList>
            <person name="Kumamoto C.A."/>
            <person name="Nault A.K."/>
        </authorList>
    </citation>
    <scope>NUCLEOTIDE SEQUENCE [GENOMIC DNA]</scope>
    <source>
        <strain>K12</strain>
    </source>
</reference>
<reference key="2">
    <citation type="journal article" date="1994" name="Nucleic Acids Res.">
        <title>Analysis of the Escherichia coli genome. V. DNA sequence of the region from 76.0 to 81.5 minutes.</title>
        <authorList>
            <person name="Sofia H.J."/>
            <person name="Burland V."/>
            <person name="Daniels D.L."/>
            <person name="Plunkett G. III"/>
            <person name="Blattner F.R."/>
        </authorList>
    </citation>
    <scope>NUCLEOTIDE SEQUENCE [LARGE SCALE GENOMIC DNA]</scope>
    <source>
        <strain>K12 / MG1655 / ATCC 47076</strain>
    </source>
</reference>
<reference key="3">
    <citation type="journal article" date="1997" name="Science">
        <title>The complete genome sequence of Escherichia coli K-12.</title>
        <authorList>
            <person name="Blattner F.R."/>
            <person name="Plunkett G. III"/>
            <person name="Bloch C.A."/>
            <person name="Perna N.T."/>
            <person name="Burland V."/>
            <person name="Riley M."/>
            <person name="Collado-Vides J."/>
            <person name="Glasner J.D."/>
            <person name="Rode C.K."/>
            <person name="Mayhew G.F."/>
            <person name="Gregor J."/>
            <person name="Davis N.W."/>
            <person name="Kirkpatrick H.A."/>
            <person name="Goeden M.A."/>
            <person name="Rose D.J."/>
            <person name="Mau B."/>
            <person name="Shao Y."/>
        </authorList>
    </citation>
    <scope>NUCLEOTIDE SEQUENCE [LARGE SCALE GENOMIC DNA]</scope>
    <source>
        <strain>K12 / MG1655 / ATCC 47076</strain>
    </source>
</reference>
<reference key="4">
    <citation type="journal article" date="2006" name="Mol. Syst. Biol.">
        <title>Highly accurate genome sequences of Escherichia coli K-12 strains MG1655 and W3110.</title>
        <authorList>
            <person name="Hayashi K."/>
            <person name="Morooka N."/>
            <person name="Yamamoto Y."/>
            <person name="Fujita K."/>
            <person name="Isono K."/>
            <person name="Choi S."/>
            <person name="Ohtsubo E."/>
            <person name="Baba T."/>
            <person name="Wanner B.L."/>
            <person name="Mori H."/>
            <person name="Horiuchi T."/>
        </authorList>
    </citation>
    <scope>NUCLEOTIDE SEQUENCE [LARGE SCALE GENOMIC DNA]</scope>
    <source>
        <strain>K12 / W3110 / ATCC 27325 / DSM 5911</strain>
    </source>
</reference>
<reference key="5">
    <citation type="journal article" date="1997" name="Electrophoresis">
        <title>Escherichia coli proteome analysis using the gene-protein database.</title>
        <authorList>
            <person name="VanBogelen R.A."/>
            <person name="Abshire K.Z."/>
            <person name="Moldover B."/>
            <person name="Olson E.R."/>
            <person name="Neidhardt F.C."/>
        </authorList>
    </citation>
    <scope>IDENTIFICATION BY 2D-GEL</scope>
</reference>
<reference key="6">
    <citation type="journal article" date="2006" name="J. Biol. Chem.">
        <title>Defining the role of the Escherichia coli chaperone SecB using comparative proteomics.</title>
        <authorList>
            <person name="Baars L."/>
            <person name="Ytterberg A.J."/>
            <person name="Drew D."/>
            <person name="Wagner S."/>
            <person name="Thilo C."/>
            <person name="van Wijk K.J."/>
            <person name="de Gier J.W."/>
        </authorList>
    </citation>
    <scope>FUNCTION</scope>
    <scope>SUBSTRATES</scope>
    <scope>DISRUPTION PHENOTYPE</scope>
    <source>
        <strain>K12 / MC4100 / ATCC 35695 / DSM 6574</strain>
    </source>
</reference>
<reference key="7">
    <citation type="journal article" date="2006" name="Protein Sci.">
        <title>New Escherichia coli outer membrane proteins identified through prediction and experimental verification.</title>
        <authorList>
            <person name="Marani P."/>
            <person name="Wagner S."/>
            <person name="Baars L."/>
            <person name="Genevaux P."/>
            <person name="de Gier J.W."/>
            <person name="Nilsson I."/>
            <person name="Casadio R."/>
            <person name="von Heijne G."/>
        </authorList>
    </citation>
    <scope>FUNCTION</scope>
    <scope>SUBSTRATES</scope>
    <scope>DISRUPTION PHENOTYPE</scope>
    <source>
        <strain>K12 / MG1655 / ATCC 47076</strain>
    </source>
</reference>
<reference evidence="6" key="8">
    <citation type="journal article" date="2003" name="J. Struct. Biol.">
        <title>Crystal structure of SecB from Escherichia coli.</title>
        <authorList>
            <person name="Dekker C."/>
            <person name="de Kruijff B."/>
            <person name="Gros P."/>
        </authorList>
    </citation>
    <scope>X-RAY CRYSTALLOGRAPHY (2.35 ANGSTROMS) OF 1-153</scope>
    <scope>SUBUNIT</scope>
</reference>
<reference evidence="7 8 9 10 11 12 13" key="9">
    <citation type="journal article" date="2016" name="Nature">
        <title>Structural basis for the antifolding activity of a molecular chaperone.</title>
        <authorList>
            <person name="Huang C."/>
            <person name="Rossi P."/>
            <person name="Saio T."/>
            <person name="Kalodimos C.G."/>
        </authorList>
    </citation>
    <scope>STRUCTURE BY NMR IN COMPLEX WITH SUBSTRATES</scope>
    <scope>FUNCTION</scope>
    <scope>SUBUNIT</scope>
</reference>
<reference key="10">
    <citation type="journal article" date="2007" name="Nat. Rev. Microbiol.">
        <title>Bacterial protein secretion through the translocase nanomachine.</title>
        <authorList>
            <person name="Papanikou E."/>
            <person name="Karamanou S."/>
            <person name="Economou A."/>
        </authorList>
    </citation>
    <scope>REVIEW OF PROTEIN SECRETION</scope>
</reference>
<organism>
    <name type="scientific">Escherichia coli (strain K12)</name>
    <dbReference type="NCBI Taxonomy" id="83333"/>
    <lineage>
        <taxon>Bacteria</taxon>
        <taxon>Pseudomonadati</taxon>
        <taxon>Pseudomonadota</taxon>
        <taxon>Gammaproteobacteria</taxon>
        <taxon>Enterobacterales</taxon>
        <taxon>Enterobacteriaceae</taxon>
        <taxon>Escherichia</taxon>
    </lineage>
</organism>
<proteinExistence type="evidence at protein level"/>
<protein>
    <recommendedName>
        <fullName>Protein-export protein SecB</fullName>
    </recommendedName>
    <alternativeName>
        <fullName>Chaperone SecB</fullName>
    </alternativeName>
</protein>
<keyword id="KW-0002">3D-structure</keyword>
<keyword id="KW-0143">Chaperone</keyword>
<keyword id="KW-0963">Cytoplasm</keyword>
<keyword id="KW-0653">Protein transport</keyword>
<keyword id="KW-1185">Reference proteome</keyword>
<keyword id="KW-0811">Translocation</keyword>
<keyword id="KW-0813">Transport</keyword>
<evidence type="ECO:0000269" key="1">
    <source>
    </source>
</evidence>
<evidence type="ECO:0000269" key="2">
    <source>
    </source>
</evidence>
<evidence type="ECO:0000269" key="3">
    <source>
    </source>
</evidence>
<evidence type="ECO:0000269" key="4">
    <source>
    </source>
</evidence>
<evidence type="ECO:0000305" key="5"/>
<evidence type="ECO:0007744" key="6">
    <source>
        <dbReference type="PDB" id="1QYN"/>
    </source>
</evidence>
<evidence type="ECO:0007744" key="7">
    <source>
        <dbReference type="PDB" id="5JTL"/>
    </source>
</evidence>
<evidence type="ECO:0007744" key="8">
    <source>
        <dbReference type="PDB" id="5JTM"/>
    </source>
</evidence>
<evidence type="ECO:0007744" key="9">
    <source>
        <dbReference type="PDB" id="5JTN"/>
    </source>
</evidence>
<evidence type="ECO:0007744" key="10">
    <source>
        <dbReference type="PDB" id="5JTO"/>
    </source>
</evidence>
<evidence type="ECO:0007744" key="11">
    <source>
        <dbReference type="PDB" id="5JTP"/>
    </source>
</evidence>
<evidence type="ECO:0007744" key="12">
    <source>
        <dbReference type="PDB" id="5JTQ"/>
    </source>
</evidence>
<evidence type="ECO:0007744" key="13">
    <source>
        <dbReference type="PDB" id="5JTR"/>
    </source>
</evidence>
<evidence type="ECO:0007829" key="14">
    <source>
        <dbReference type="PDB" id="1QYN"/>
    </source>
</evidence>
<evidence type="ECO:0007829" key="15">
    <source>
        <dbReference type="PDB" id="5JTM"/>
    </source>
</evidence>
<gene>
    <name type="primary">secB</name>
    <name type="ordered locus">b3609</name>
    <name type="ordered locus">JW3584</name>
</gene>
<comment type="function">
    <text evidence="2 3 4">One of the proteins required for the normal export of some preproteins out of the cell cytoplasm. It is a molecular chaperone that binds to a subset of precursor proteins, maintaining them in a translocation-competent state. For 2 proteins (MBP, MalE and PhoA) the substrate is wrapped around the homotetramer, which prevents it from folding (PubMed:27501151). It also specifically binds to its receptor SecA. Its substrates include DegP, FhuA, FkpA, GBP, LamB, MalE (MBP), OmpA, OmpF, OmpT, OmpX, OppA, PhoE, TolB, TolC, YbgF, YcgK, YgiW and YncE (PubMed:16352602).</text>
</comment>
<comment type="subunit">
    <text evidence="1 4">Homotetramer, a dimer of dimers (PubMed:14643199, PubMed:27501151). One homotetramer interacts with 1 SecA dimer.</text>
</comment>
<comment type="interaction">
    <interactant intactId="EBI-555877">
        <id>P0AG86</id>
    </interactant>
    <interactant intactId="EBI-550918">
        <id>P0AE88</id>
        <label>cpxR</label>
    </interactant>
    <organismsDiffer>false</organismsDiffer>
    <experiments>3</experiments>
</comment>
<comment type="interaction">
    <interactant intactId="EBI-555877">
        <id>P0AG86</id>
    </interactant>
    <interactant intactId="EBI-543213">
        <id>P10408</id>
        <label>secA</label>
    </interactant>
    <organismsDiffer>false</organismsDiffer>
    <experiments>6</experiments>
</comment>
<comment type="subcellular location">
    <subcellularLocation>
        <location>Cytoplasm</location>
    </subcellularLocation>
</comment>
<comment type="disruption phenotype">
    <text evidence="2 3">Growth continues, but export of its substrates is blocked (PubMed:16352602, PubMed:16522795). Expression of chaperones DnaK, GroEL/ES, ClpB, and HslU increases (PubMed:16352602).</text>
</comment>
<comment type="similarity">
    <text evidence="5">Belongs to the SecB family.</text>
</comment>